<reference key="1">
    <citation type="journal article" date="2009" name="PLoS ONE">
        <title>Salmonella paratyphi C: genetic divergence from Salmonella choleraesuis and pathogenic convergence with Salmonella typhi.</title>
        <authorList>
            <person name="Liu W.-Q."/>
            <person name="Feng Y."/>
            <person name="Wang Y."/>
            <person name="Zou Q.-H."/>
            <person name="Chen F."/>
            <person name="Guo J.-T."/>
            <person name="Peng Y.-H."/>
            <person name="Jin Y."/>
            <person name="Li Y.-G."/>
            <person name="Hu S.-N."/>
            <person name="Johnston R.N."/>
            <person name="Liu G.-R."/>
            <person name="Liu S.-L."/>
        </authorList>
    </citation>
    <scope>NUCLEOTIDE SEQUENCE [LARGE SCALE GENOMIC DNA]</scope>
    <source>
        <strain>RKS4594</strain>
    </source>
</reference>
<accession>C0Q393</accession>
<keyword id="KW-0997">Cell inner membrane</keyword>
<keyword id="KW-1003">Cell membrane</keyword>
<keyword id="KW-0444">Lipid biosynthesis</keyword>
<keyword id="KW-0443">Lipid metabolism</keyword>
<keyword id="KW-0472">Membrane</keyword>
<keyword id="KW-0594">Phospholipid biosynthesis</keyword>
<keyword id="KW-1208">Phospholipid metabolism</keyword>
<keyword id="KW-0677">Repeat</keyword>
<keyword id="KW-0808">Transferase</keyword>
<keyword id="KW-0812">Transmembrane</keyword>
<keyword id="KW-1133">Transmembrane helix</keyword>
<proteinExistence type="inferred from homology"/>
<feature type="chain" id="PRO_1000124270" description="Cardiolipin synthase A">
    <location>
        <begin position="1"/>
        <end position="486"/>
    </location>
</feature>
<feature type="transmembrane region" description="Helical" evidence="1">
    <location>
        <begin position="3"/>
        <end position="23"/>
    </location>
</feature>
<feature type="transmembrane region" description="Helical" evidence="1">
    <location>
        <begin position="38"/>
        <end position="58"/>
    </location>
</feature>
<feature type="domain" description="PLD phosphodiesterase 1" evidence="1">
    <location>
        <begin position="219"/>
        <end position="246"/>
    </location>
</feature>
<feature type="domain" description="PLD phosphodiesterase 2" evidence="1">
    <location>
        <begin position="399"/>
        <end position="426"/>
    </location>
</feature>
<feature type="active site" evidence="1">
    <location>
        <position position="224"/>
    </location>
</feature>
<feature type="active site" evidence="1">
    <location>
        <position position="226"/>
    </location>
</feature>
<feature type="active site" evidence="1">
    <location>
        <position position="231"/>
    </location>
</feature>
<feature type="active site" evidence="1">
    <location>
        <position position="404"/>
    </location>
</feature>
<feature type="active site" evidence="1">
    <location>
        <position position="406"/>
    </location>
</feature>
<feature type="active site" evidence="1">
    <location>
        <position position="411"/>
    </location>
</feature>
<comment type="function">
    <text evidence="1">Catalyzes the reversible phosphatidyl group transfer from one phosphatidylglycerol molecule to another to form cardiolipin (CL) (diphosphatidylglycerol) and glycerol.</text>
</comment>
<comment type="catalytic activity">
    <reaction evidence="1">
        <text>2 a 1,2-diacyl-sn-glycero-3-phospho-(1'-sn-glycerol) = a cardiolipin + glycerol</text>
        <dbReference type="Rhea" id="RHEA:31451"/>
        <dbReference type="ChEBI" id="CHEBI:17754"/>
        <dbReference type="ChEBI" id="CHEBI:62237"/>
        <dbReference type="ChEBI" id="CHEBI:64716"/>
    </reaction>
</comment>
<comment type="subcellular location">
    <subcellularLocation>
        <location evidence="1">Cell inner membrane</location>
        <topology evidence="1">Multi-pass membrane protein</topology>
    </subcellularLocation>
</comment>
<comment type="similarity">
    <text evidence="1">Belongs to the phospholipase D family. Cardiolipin synthase subfamily. ClsA sub-subfamily.</text>
</comment>
<gene>
    <name evidence="1" type="primary">clsA</name>
    <name type="synonym">cls</name>
    <name type="ordered locus">SPC_1989</name>
</gene>
<organism>
    <name type="scientific">Salmonella paratyphi C (strain RKS4594)</name>
    <dbReference type="NCBI Taxonomy" id="476213"/>
    <lineage>
        <taxon>Bacteria</taxon>
        <taxon>Pseudomonadati</taxon>
        <taxon>Pseudomonadota</taxon>
        <taxon>Gammaproteobacteria</taxon>
        <taxon>Enterobacterales</taxon>
        <taxon>Enterobacteriaceae</taxon>
        <taxon>Salmonella</taxon>
    </lineage>
</organism>
<name>CLSA_SALPC</name>
<sequence>MTTFYTVVSWLVILGYWVLIAGVTLRILMKRRAVPSAMAWLLIIYILPLVGIIAYLSVGELHLGKRRAERARAMWPSTAKWLNDLKACKHIFAQENSSVASSLFKLCERRQGIAGVKGNQLQLLTDSDDVMQALIRDIQLARHNIEMVFYIWQPGGMADQVAESLMAAARRGIHCRLMLDSAGSVAFFRSPWAAMMRNAGIEVVEALKVNLMRVFLRRMDLRQHRKMVMIDNYIAYTGSMNMVDPRFFKQDAGVGQWVDLMARMEGPVATAMGIVYSCDWEIETGKRILPPPPDVNIMPFEQASGHTIHTIASGPGFPEDLIHQALLTATYAAREYLIMTTPYFVPSDDLLHAICTAAQRGVDVSIILPRKNDSLLVGWASRAFFSELLAAGVKIYQFEGGLLHTKSVLVDGELSLVGTVNLDMRSLWLNFEITLVIDDTGFGADLAAVQDDYISRSRLLDARLWVKRPLWQRITERLFYFFSPLL</sequence>
<protein>
    <recommendedName>
        <fullName evidence="1">Cardiolipin synthase A</fullName>
        <shortName evidence="1">CL synthase</shortName>
        <ecNumber evidence="1">2.7.8.-</ecNumber>
    </recommendedName>
</protein>
<dbReference type="EC" id="2.7.8.-" evidence="1"/>
<dbReference type="EMBL" id="CP000857">
    <property type="protein sequence ID" value="ACN46125.1"/>
    <property type="molecule type" value="Genomic_DNA"/>
</dbReference>
<dbReference type="RefSeq" id="WP_000206886.1">
    <property type="nucleotide sequence ID" value="NC_012125.1"/>
</dbReference>
<dbReference type="SMR" id="C0Q393"/>
<dbReference type="KEGG" id="sei:SPC_1989"/>
<dbReference type="HOGENOM" id="CLU_038053_1_0_6"/>
<dbReference type="Proteomes" id="UP000001599">
    <property type="component" value="Chromosome"/>
</dbReference>
<dbReference type="GO" id="GO:0005886">
    <property type="term" value="C:plasma membrane"/>
    <property type="evidence" value="ECO:0007669"/>
    <property type="project" value="UniProtKB-SubCell"/>
</dbReference>
<dbReference type="GO" id="GO:0008808">
    <property type="term" value="F:cardiolipin synthase activity"/>
    <property type="evidence" value="ECO:0007669"/>
    <property type="project" value="InterPro"/>
</dbReference>
<dbReference type="GO" id="GO:0032049">
    <property type="term" value="P:cardiolipin biosynthetic process"/>
    <property type="evidence" value="ECO:0007669"/>
    <property type="project" value="InterPro"/>
</dbReference>
<dbReference type="CDD" id="cd09152">
    <property type="entry name" value="PLDc_EcCLS_like_1"/>
    <property type="match status" value="1"/>
</dbReference>
<dbReference type="CDD" id="cd09158">
    <property type="entry name" value="PLDc_EcCLS_like_2"/>
    <property type="match status" value="1"/>
</dbReference>
<dbReference type="FunFam" id="3.30.870.10:FF:000002">
    <property type="entry name" value="Cardiolipin synthase A"/>
    <property type="match status" value="1"/>
</dbReference>
<dbReference type="FunFam" id="3.30.870.10:FF:000003">
    <property type="entry name" value="Cardiolipin synthase A"/>
    <property type="match status" value="1"/>
</dbReference>
<dbReference type="Gene3D" id="3.30.870.10">
    <property type="entry name" value="Endonuclease Chain A"/>
    <property type="match status" value="2"/>
</dbReference>
<dbReference type="HAMAP" id="MF_00190">
    <property type="entry name" value="Cardiolipin_synth_ClsA"/>
    <property type="match status" value="1"/>
</dbReference>
<dbReference type="InterPro" id="IPR022924">
    <property type="entry name" value="Cardiolipin_synthase"/>
</dbReference>
<dbReference type="InterPro" id="IPR030840">
    <property type="entry name" value="CL_synthase_A"/>
</dbReference>
<dbReference type="InterPro" id="IPR027379">
    <property type="entry name" value="CLS_N"/>
</dbReference>
<dbReference type="InterPro" id="IPR025202">
    <property type="entry name" value="PLD-like_dom"/>
</dbReference>
<dbReference type="InterPro" id="IPR001736">
    <property type="entry name" value="PLipase_D/transphosphatidylase"/>
</dbReference>
<dbReference type="NCBIfam" id="TIGR04265">
    <property type="entry name" value="bac_cardiolipin"/>
    <property type="match status" value="1"/>
</dbReference>
<dbReference type="PANTHER" id="PTHR21248">
    <property type="entry name" value="CARDIOLIPIN SYNTHASE"/>
    <property type="match status" value="1"/>
</dbReference>
<dbReference type="PANTHER" id="PTHR21248:SF22">
    <property type="entry name" value="PHOSPHOLIPASE D"/>
    <property type="match status" value="1"/>
</dbReference>
<dbReference type="Pfam" id="PF13091">
    <property type="entry name" value="PLDc_2"/>
    <property type="match status" value="2"/>
</dbReference>
<dbReference type="Pfam" id="PF13396">
    <property type="entry name" value="PLDc_N"/>
    <property type="match status" value="1"/>
</dbReference>
<dbReference type="SMART" id="SM00155">
    <property type="entry name" value="PLDc"/>
    <property type="match status" value="2"/>
</dbReference>
<dbReference type="SUPFAM" id="SSF56024">
    <property type="entry name" value="Phospholipase D/nuclease"/>
    <property type="match status" value="2"/>
</dbReference>
<dbReference type="PROSITE" id="PS50035">
    <property type="entry name" value="PLD"/>
    <property type="match status" value="2"/>
</dbReference>
<evidence type="ECO:0000255" key="1">
    <source>
        <dbReference type="HAMAP-Rule" id="MF_00190"/>
    </source>
</evidence>